<reference key="1">
    <citation type="journal article" date="2002" name="J. Bacteriol.">
        <title>Whole-genome comparison of Mycobacterium tuberculosis clinical and laboratory strains.</title>
        <authorList>
            <person name="Fleischmann R.D."/>
            <person name="Alland D."/>
            <person name="Eisen J.A."/>
            <person name="Carpenter L."/>
            <person name="White O."/>
            <person name="Peterson J.D."/>
            <person name="DeBoy R.T."/>
            <person name="Dodson R.J."/>
            <person name="Gwinn M.L."/>
            <person name="Haft D.H."/>
            <person name="Hickey E.K."/>
            <person name="Kolonay J.F."/>
            <person name="Nelson W.C."/>
            <person name="Umayam L.A."/>
            <person name="Ermolaeva M.D."/>
            <person name="Salzberg S.L."/>
            <person name="Delcher A."/>
            <person name="Utterback T.R."/>
            <person name="Weidman J.F."/>
            <person name="Khouri H.M."/>
            <person name="Gill J."/>
            <person name="Mikula A."/>
            <person name="Bishai W."/>
            <person name="Jacobs W.R. Jr."/>
            <person name="Venter J.C."/>
            <person name="Fraser C.M."/>
        </authorList>
    </citation>
    <scope>NUCLEOTIDE SEQUENCE [LARGE SCALE GENOMIC DNA]</scope>
    <source>
        <strain>CDC 1551 / Oshkosh</strain>
    </source>
</reference>
<gene>
    <name type="ordered locus">MT3772</name>
</gene>
<evidence type="ECO:0000250" key="1"/>
<evidence type="ECO:0000255" key="2"/>
<evidence type="ECO:0000255" key="3">
    <source>
        <dbReference type="PROSITE-ProRule" id="PRU10079"/>
    </source>
</evidence>
<evidence type="ECO:0000305" key="4"/>
<accession>P9WHR8</accession>
<accession>L0TDG7</accession>
<accession>O69639</accession>
<accession>Q7D538</accession>
<proteinExistence type="inferred from homology"/>
<comment type="function">
    <text evidence="1">Required for M.tuberculosis resistance to oxidative stress in addition to its role in resistance to acid, which is essential for virulence.</text>
</comment>
<comment type="subunit">
    <text evidence="1">Monomer.</text>
</comment>
<comment type="subcellular location">
    <subcellularLocation>
        <location evidence="4">Membrane</location>
        <topology evidence="4">Multi-pass membrane protein</topology>
    </subcellularLocation>
</comment>
<comment type="miscellaneous">
    <text evidence="1">Disulfide bond increases the proteolytic activity by stabilizing the protease in the conformation in which the active site residues are properly positioned for substrate binding and catalysis.</text>
</comment>
<comment type="similarity">
    <text evidence="4">Belongs to the peptidase S1C family.</text>
</comment>
<protein>
    <recommendedName>
        <fullName>Serine protease MT3772</fullName>
        <ecNumber>3.4.21.-</ecNumber>
    </recommendedName>
</protein>
<sequence>MTPSQWLDIAVLAVAFIAAISGWRAGALGSMLSFGGVLLGATAGVLLAPHIVSQISAPRAKLFAALFLILALVVVGEVAGVVLGRAVRGAIRNRPIRLIDSVIGVGVQLVVVLTAAWLLAMPLTQSKEQPELAAAVKGSRVLARVNEAAPTWLKTVPKRLSALLNTSGLPAVLEPFSRTPVIPVASPDPALVNNPVVAATEPSVVKIRSLAPRCQKVLEGTGFVISPDRVMTNAHVVAGSNNVTVYAGDKPFEATVVSYDPSVDVAILAVPHLPPPPLVFAAEPAKTGADVVVLGYPGGGNFTATPARIREAIRLSGPDIYGDPEPVTRDVYTIRADVEQGDSGGPLIDLNGQVLGVVFGAAIDDAETGFVLTAGEVAGQLAKIGATQPVGTGACVS</sequence>
<keyword id="KW-0068">Autocatalytic cleavage</keyword>
<keyword id="KW-1015">Disulfide bond</keyword>
<keyword id="KW-0378">Hydrolase</keyword>
<keyword id="KW-0472">Membrane</keyword>
<keyword id="KW-0645">Protease</keyword>
<keyword id="KW-1185">Reference proteome</keyword>
<keyword id="KW-0812">Transmembrane</keyword>
<keyword id="KW-1133">Transmembrane helix</keyword>
<organism>
    <name type="scientific">Mycobacterium tuberculosis (strain CDC 1551 / Oshkosh)</name>
    <dbReference type="NCBI Taxonomy" id="83331"/>
    <lineage>
        <taxon>Bacteria</taxon>
        <taxon>Bacillati</taxon>
        <taxon>Actinomycetota</taxon>
        <taxon>Actinomycetes</taxon>
        <taxon>Mycobacteriales</taxon>
        <taxon>Mycobacteriaceae</taxon>
        <taxon>Mycobacterium</taxon>
        <taxon>Mycobacterium tuberculosis complex</taxon>
    </lineage>
</organism>
<dbReference type="EC" id="3.4.21.-"/>
<dbReference type="EMBL" id="AE000516">
    <property type="protein sequence ID" value="AAK48139.1"/>
    <property type="molecule type" value="Genomic_DNA"/>
</dbReference>
<dbReference type="PIR" id="H70789">
    <property type="entry name" value="H70789"/>
</dbReference>
<dbReference type="SMR" id="P9WHR8"/>
<dbReference type="MEROPS" id="S01.513"/>
<dbReference type="KEGG" id="mtc:MT3772"/>
<dbReference type="PATRIC" id="fig|83331.31.peg.4062"/>
<dbReference type="HOGENOM" id="CLU_043139_0_0_11"/>
<dbReference type="Proteomes" id="UP000001020">
    <property type="component" value="Chromosome"/>
</dbReference>
<dbReference type="GO" id="GO:0016020">
    <property type="term" value="C:membrane"/>
    <property type="evidence" value="ECO:0007669"/>
    <property type="project" value="UniProtKB-SubCell"/>
</dbReference>
<dbReference type="GO" id="GO:0004252">
    <property type="term" value="F:serine-type endopeptidase activity"/>
    <property type="evidence" value="ECO:0007669"/>
    <property type="project" value="InterPro"/>
</dbReference>
<dbReference type="GO" id="GO:0006508">
    <property type="term" value="P:proteolysis"/>
    <property type="evidence" value="ECO:0007669"/>
    <property type="project" value="UniProtKB-KW"/>
</dbReference>
<dbReference type="GO" id="GO:0009403">
    <property type="term" value="P:toxin biosynthetic process"/>
    <property type="evidence" value="ECO:0007669"/>
    <property type="project" value="InterPro"/>
</dbReference>
<dbReference type="Gene3D" id="2.40.10.10">
    <property type="entry name" value="Trypsin-like serine proteases"/>
    <property type="match status" value="2"/>
</dbReference>
<dbReference type="InterPro" id="IPR003825">
    <property type="entry name" value="Colicin-V_CvpA"/>
</dbReference>
<dbReference type="InterPro" id="IPR047680">
    <property type="entry name" value="MarP-like"/>
</dbReference>
<dbReference type="InterPro" id="IPR009003">
    <property type="entry name" value="Peptidase_S1_PA"/>
</dbReference>
<dbReference type="InterPro" id="IPR043504">
    <property type="entry name" value="Peptidase_S1_PA_chymotrypsin"/>
</dbReference>
<dbReference type="InterPro" id="IPR001940">
    <property type="entry name" value="Peptidase_S1C"/>
</dbReference>
<dbReference type="NCBIfam" id="NF033740">
    <property type="entry name" value="MarP_fam_protase"/>
    <property type="match status" value="1"/>
</dbReference>
<dbReference type="PANTHER" id="PTHR43019:SF23">
    <property type="entry name" value="PROTEASE DO-LIKE 5, CHLOROPLASTIC"/>
    <property type="match status" value="1"/>
</dbReference>
<dbReference type="PANTHER" id="PTHR43019">
    <property type="entry name" value="SERINE ENDOPROTEASE DEGS"/>
    <property type="match status" value="1"/>
</dbReference>
<dbReference type="Pfam" id="PF02674">
    <property type="entry name" value="Colicin_V"/>
    <property type="match status" value="1"/>
</dbReference>
<dbReference type="Pfam" id="PF13365">
    <property type="entry name" value="Trypsin_2"/>
    <property type="match status" value="1"/>
</dbReference>
<dbReference type="PRINTS" id="PR00834">
    <property type="entry name" value="PROTEASES2C"/>
</dbReference>
<dbReference type="SUPFAM" id="SSF50494">
    <property type="entry name" value="Trypsin-like serine proteases"/>
    <property type="match status" value="1"/>
</dbReference>
<dbReference type="PROSITE" id="PS00135">
    <property type="entry name" value="TRYPSIN_SER"/>
    <property type="match status" value="1"/>
</dbReference>
<feature type="chain" id="PRO_0000428135" description="Serine protease MT3772">
    <location>
        <begin position="1"/>
        <end position="397"/>
    </location>
</feature>
<feature type="transmembrane region" description="Helical" evidence="2">
    <location>
        <begin position="9"/>
        <end position="29"/>
    </location>
</feature>
<feature type="transmembrane region" description="Helical" evidence="2">
    <location>
        <begin position="32"/>
        <end position="52"/>
    </location>
</feature>
<feature type="transmembrane region" description="Helical" evidence="2">
    <location>
        <begin position="62"/>
        <end position="82"/>
    </location>
</feature>
<feature type="transmembrane region" description="Helical" evidence="2">
    <location>
        <begin position="102"/>
        <end position="122"/>
    </location>
</feature>
<feature type="active site" description="Proton acceptor" evidence="2">
    <location>
        <position position="235"/>
    </location>
</feature>
<feature type="active site" evidence="2">
    <location>
        <position position="264"/>
    </location>
</feature>
<feature type="active site" description="Charge relay system" evidence="3">
    <location>
        <position position="343"/>
    </location>
</feature>
<feature type="site" description="Cleavage; by autolysis" evidence="1">
    <location>
        <begin position="160"/>
        <end position="161"/>
    </location>
</feature>
<feature type="disulfide bond" evidence="1">
    <location>
        <begin position="214"/>
        <end position="395"/>
    </location>
</feature>
<name>Y3671_MYCTO</name>